<sequence>MIEADRLISAAVINDEESIDRAIRPKLLTEYVGQPHVREQMEIFIQAAKQRGDALDHVLIFGPPGLGKTTLANIIANEMGVNLRTTSGPVLEKAGDLAAMLTNLEPHDVLFIDEIHRLSPVVEEILYPAMEDYQLDIMIGEGPAARSIKLDLPPFTLIGATTRAGSLTSPLRDRFGIVQRLEFYQVADLEHIVSRSAKCLGLELTPEGAHQLARRSRGTPRITNRLLRRVRDFAEVRADGAINGEVAMKALDMLNVDAEGFDFMDRKLLLAVIDKFMGGPVGLDNLAAAIGEERETIEDVLEPYLIQQGFIQRTPRGRIATNHAYKHFGITREE</sequence>
<name>RUVB_YERPY</name>
<evidence type="ECO:0000255" key="1">
    <source>
        <dbReference type="HAMAP-Rule" id="MF_00016"/>
    </source>
</evidence>
<reference key="1">
    <citation type="submission" date="2008-02" db="EMBL/GenBank/DDBJ databases">
        <title>Complete sequence of Yersinia pseudotuberculosis YPIII.</title>
        <authorList>
            <consortium name="US DOE Joint Genome Institute"/>
            <person name="Copeland A."/>
            <person name="Lucas S."/>
            <person name="Lapidus A."/>
            <person name="Glavina del Rio T."/>
            <person name="Dalin E."/>
            <person name="Tice H."/>
            <person name="Bruce D."/>
            <person name="Goodwin L."/>
            <person name="Pitluck S."/>
            <person name="Munk A.C."/>
            <person name="Brettin T."/>
            <person name="Detter J.C."/>
            <person name="Han C."/>
            <person name="Tapia R."/>
            <person name="Schmutz J."/>
            <person name="Larimer F."/>
            <person name="Land M."/>
            <person name="Hauser L."/>
            <person name="Challacombe J.F."/>
            <person name="Green L."/>
            <person name="Lindler L.E."/>
            <person name="Nikolich M.P."/>
            <person name="Richardson P."/>
        </authorList>
    </citation>
    <scope>NUCLEOTIDE SEQUENCE [LARGE SCALE GENOMIC DNA]</scope>
    <source>
        <strain>YPIII</strain>
    </source>
</reference>
<protein>
    <recommendedName>
        <fullName evidence="1">Holliday junction branch migration complex subunit RuvB</fullName>
        <ecNumber evidence="1">3.6.4.-</ecNumber>
    </recommendedName>
</protein>
<dbReference type="EC" id="3.6.4.-" evidence="1"/>
<dbReference type="EMBL" id="CP000950">
    <property type="protein sequence ID" value="ACA68429.1"/>
    <property type="molecule type" value="Genomic_DNA"/>
</dbReference>
<dbReference type="RefSeq" id="WP_002211198.1">
    <property type="nucleotide sequence ID" value="NZ_CP009792.1"/>
</dbReference>
<dbReference type="SMR" id="B1JLL0"/>
<dbReference type="GeneID" id="57976603"/>
<dbReference type="KEGG" id="ypy:YPK_2143"/>
<dbReference type="PATRIC" id="fig|502800.11.peg.2816"/>
<dbReference type="GO" id="GO:0005737">
    <property type="term" value="C:cytoplasm"/>
    <property type="evidence" value="ECO:0007669"/>
    <property type="project" value="UniProtKB-SubCell"/>
</dbReference>
<dbReference type="GO" id="GO:0048476">
    <property type="term" value="C:Holliday junction resolvase complex"/>
    <property type="evidence" value="ECO:0007669"/>
    <property type="project" value="UniProtKB-UniRule"/>
</dbReference>
<dbReference type="GO" id="GO:0005524">
    <property type="term" value="F:ATP binding"/>
    <property type="evidence" value="ECO:0007669"/>
    <property type="project" value="UniProtKB-UniRule"/>
</dbReference>
<dbReference type="GO" id="GO:0016887">
    <property type="term" value="F:ATP hydrolysis activity"/>
    <property type="evidence" value="ECO:0007669"/>
    <property type="project" value="InterPro"/>
</dbReference>
<dbReference type="GO" id="GO:0000400">
    <property type="term" value="F:four-way junction DNA binding"/>
    <property type="evidence" value="ECO:0007669"/>
    <property type="project" value="UniProtKB-UniRule"/>
</dbReference>
<dbReference type="GO" id="GO:0009378">
    <property type="term" value="F:four-way junction helicase activity"/>
    <property type="evidence" value="ECO:0007669"/>
    <property type="project" value="InterPro"/>
</dbReference>
<dbReference type="GO" id="GO:0006310">
    <property type="term" value="P:DNA recombination"/>
    <property type="evidence" value="ECO:0007669"/>
    <property type="project" value="UniProtKB-UniRule"/>
</dbReference>
<dbReference type="GO" id="GO:0006281">
    <property type="term" value="P:DNA repair"/>
    <property type="evidence" value="ECO:0007669"/>
    <property type="project" value="UniProtKB-UniRule"/>
</dbReference>
<dbReference type="CDD" id="cd00009">
    <property type="entry name" value="AAA"/>
    <property type="match status" value="1"/>
</dbReference>
<dbReference type="FunFam" id="1.10.10.10:FF:000086">
    <property type="entry name" value="Holliday junction ATP-dependent DNA helicase RuvB"/>
    <property type="match status" value="1"/>
</dbReference>
<dbReference type="FunFam" id="1.10.8.60:FF:000023">
    <property type="entry name" value="Holliday junction ATP-dependent DNA helicase RuvB"/>
    <property type="match status" value="1"/>
</dbReference>
<dbReference type="FunFam" id="3.40.50.300:FF:000073">
    <property type="entry name" value="Holliday junction ATP-dependent DNA helicase RuvB"/>
    <property type="match status" value="1"/>
</dbReference>
<dbReference type="Gene3D" id="1.10.8.60">
    <property type="match status" value="1"/>
</dbReference>
<dbReference type="Gene3D" id="3.40.50.300">
    <property type="entry name" value="P-loop containing nucleotide triphosphate hydrolases"/>
    <property type="match status" value="1"/>
</dbReference>
<dbReference type="Gene3D" id="1.10.10.10">
    <property type="entry name" value="Winged helix-like DNA-binding domain superfamily/Winged helix DNA-binding domain"/>
    <property type="match status" value="1"/>
</dbReference>
<dbReference type="HAMAP" id="MF_00016">
    <property type="entry name" value="DNA_HJ_migration_RuvB"/>
    <property type="match status" value="1"/>
</dbReference>
<dbReference type="InterPro" id="IPR003593">
    <property type="entry name" value="AAA+_ATPase"/>
</dbReference>
<dbReference type="InterPro" id="IPR041445">
    <property type="entry name" value="AAA_lid_4"/>
</dbReference>
<dbReference type="InterPro" id="IPR004605">
    <property type="entry name" value="DNA_helicase_Holl-junc_RuvB"/>
</dbReference>
<dbReference type="InterPro" id="IPR027417">
    <property type="entry name" value="P-loop_NTPase"/>
</dbReference>
<dbReference type="InterPro" id="IPR008824">
    <property type="entry name" value="RuvB-like_N"/>
</dbReference>
<dbReference type="InterPro" id="IPR008823">
    <property type="entry name" value="RuvB_C"/>
</dbReference>
<dbReference type="InterPro" id="IPR036388">
    <property type="entry name" value="WH-like_DNA-bd_sf"/>
</dbReference>
<dbReference type="InterPro" id="IPR036390">
    <property type="entry name" value="WH_DNA-bd_sf"/>
</dbReference>
<dbReference type="NCBIfam" id="NF000868">
    <property type="entry name" value="PRK00080.1"/>
    <property type="match status" value="1"/>
</dbReference>
<dbReference type="NCBIfam" id="TIGR00635">
    <property type="entry name" value="ruvB"/>
    <property type="match status" value="1"/>
</dbReference>
<dbReference type="PANTHER" id="PTHR42848">
    <property type="match status" value="1"/>
</dbReference>
<dbReference type="PANTHER" id="PTHR42848:SF1">
    <property type="entry name" value="HOLLIDAY JUNCTION BRANCH MIGRATION COMPLEX SUBUNIT RUVB"/>
    <property type="match status" value="1"/>
</dbReference>
<dbReference type="Pfam" id="PF17864">
    <property type="entry name" value="AAA_lid_4"/>
    <property type="match status" value="1"/>
</dbReference>
<dbReference type="Pfam" id="PF05491">
    <property type="entry name" value="RuvB_C"/>
    <property type="match status" value="1"/>
</dbReference>
<dbReference type="Pfam" id="PF05496">
    <property type="entry name" value="RuvB_N"/>
    <property type="match status" value="1"/>
</dbReference>
<dbReference type="SMART" id="SM00382">
    <property type="entry name" value="AAA"/>
    <property type="match status" value="1"/>
</dbReference>
<dbReference type="SUPFAM" id="SSF52540">
    <property type="entry name" value="P-loop containing nucleoside triphosphate hydrolases"/>
    <property type="match status" value="1"/>
</dbReference>
<dbReference type="SUPFAM" id="SSF46785">
    <property type="entry name" value="Winged helix' DNA-binding domain"/>
    <property type="match status" value="1"/>
</dbReference>
<proteinExistence type="inferred from homology"/>
<keyword id="KW-0067">ATP-binding</keyword>
<keyword id="KW-0963">Cytoplasm</keyword>
<keyword id="KW-0227">DNA damage</keyword>
<keyword id="KW-0233">DNA recombination</keyword>
<keyword id="KW-0234">DNA repair</keyword>
<keyword id="KW-0238">DNA-binding</keyword>
<keyword id="KW-0378">Hydrolase</keyword>
<keyword id="KW-0547">Nucleotide-binding</keyword>
<gene>
    <name evidence="1" type="primary">ruvB</name>
    <name type="ordered locus">YPK_2143</name>
</gene>
<organism>
    <name type="scientific">Yersinia pseudotuberculosis serotype O:3 (strain YPIII)</name>
    <dbReference type="NCBI Taxonomy" id="502800"/>
    <lineage>
        <taxon>Bacteria</taxon>
        <taxon>Pseudomonadati</taxon>
        <taxon>Pseudomonadota</taxon>
        <taxon>Gammaproteobacteria</taxon>
        <taxon>Enterobacterales</taxon>
        <taxon>Yersiniaceae</taxon>
        <taxon>Yersinia</taxon>
    </lineage>
</organism>
<comment type="function">
    <text evidence="1">The RuvA-RuvB-RuvC complex processes Holliday junction (HJ) DNA during genetic recombination and DNA repair, while the RuvA-RuvB complex plays an important role in the rescue of blocked DNA replication forks via replication fork reversal (RFR). RuvA specifically binds to HJ cruciform DNA, conferring on it an open structure. The RuvB hexamer acts as an ATP-dependent pump, pulling dsDNA into and through the RuvAB complex. RuvB forms 2 homohexamers on either side of HJ DNA bound by 1 or 2 RuvA tetramers; 4 subunits per hexamer contact DNA at a time. Coordinated motions by a converter formed by DNA-disengaged RuvB subunits stimulates ATP hydrolysis and nucleotide exchange. Immobilization of the converter enables RuvB to convert the ATP-contained energy into a lever motion, pulling 2 nucleotides of DNA out of the RuvA tetramer per ATP hydrolyzed, thus driving DNA branch migration. The RuvB motors rotate together with the DNA substrate, which together with the progressing nucleotide cycle form the mechanistic basis for DNA recombination by continuous HJ branch migration. Branch migration allows RuvC to scan DNA until it finds its consensus sequence, where it cleaves and resolves cruciform DNA.</text>
</comment>
<comment type="catalytic activity">
    <reaction evidence="1">
        <text>ATP + H2O = ADP + phosphate + H(+)</text>
        <dbReference type="Rhea" id="RHEA:13065"/>
        <dbReference type="ChEBI" id="CHEBI:15377"/>
        <dbReference type="ChEBI" id="CHEBI:15378"/>
        <dbReference type="ChEBI" id="CHEBI:30616"/>
        <dbReference type="ChEBI" id="CHEBI:43474"/>
        <dbReference type="ChEBI" id="CHEBI:456216"/>
    </reaction>
</comment>
<comment type="subunit">
    <text evidence="1">Homohexamer. Forms an RuvA(8)-RuvB(12)-Holliday junction (HJ) complex. HJ DNA is sandwiched between 2 RuvA tetramers; dsDNA enters through RuvA and exits via RuvB. An RuvB hexamer assembles on each DNA strand where it exits the tetramer. Each RuvB hexamer is contacted by two RuvA subunits (via domain III) on 2 adjacent RuvB subunits; this complex drives branch migration. In the full resolvosome a probable DNA-RuvA(4)-RuvB(12)-RuvC(2) complex forms which resolves the HJ.</text>
</comment>
<comment type="subcellular location">
    <subcellularLocation>
        <location evidence="1">Cytoplasm</location>
    </subcellularLocation>
</comment>
<comment type="domain">
    <text evidence="1">Has 3 domains, the large (RuvB-L) and small ATPase (RuvB-S) domains and the C-terminal head (RuvB-H) domain. The head domain binds DNA, while the ATPase domains jointly bind ATP, ADP or are empty depending on the state of the subunit in the translocation cycle. During a single DNA translocation step the structure of each domain remains the same, but their relative positions change.</text>
</comment>
<comment type="similarity">
    <text evidence="1">Belongs to the RuvB family.</text>
</comment>
<feature type="chain" id="PRO_1000089700" description="Holliday junction branch migration complex subunit RuvB">
    <location>
        <begin position="1"/>
        <end position="334"/>
    </location>
</feature>
<feature type="region of interest" description="Large ATPase domain (RuvB-L)" evidence="1">
    <location>
        <begin position="4"/>
        <end position="184"/>
    </location>
</feature>
<feature type="region of interest" description="Small ATPAse domain (RuvB-S)" evidence="1">
    <location>
        <begin position="185"/>
        <end position="255"/>
    </location>
</feature>
<feature type="region of interest" description="Head domain (RuvB-H)" evidence="1">
    <location>
        <begin position="258"/>
        <end position="334"/>
    </location>
</feature>
<feature type="binding site" evidence="1">
    <location>
        <position position="23"/>
    </location>
    <ligand>
        <name>ATP</name>
        <dbReference type="ChEBI" id="CHEBI:30616"/>
    </ligand>
</feature>
<feature type="binding site" evidence="1">
    <location>
        <position position="24"/>
    </location>
    <ligand>
        <name>ATP</name>
        <dbReference type="ChEBI" id="CHEBI:30616"/>
    </ligand>
</feature>
<feature type="binding site" evidence="1">
    <location>
        <position position="65"/>
    </location>
    <ligand>
        <name>ATP</name>
        <dbReference type="ChEBI" id="CHEBI:30616"/>
    </ligand>
</feature>
<feature type="binding site" evidence="1">
    <location>
        <position position="68"/>
    </location>
    <ligand>
        <name>ATP</name>
        <dbReference type="ChEBI" id="CHEBI:30616"/>
    </ligand>
</feature>
<feature type="binding site" evidence="1">
    <location>
        <position position="69"/>
    </location>
    <ligand>
        <name>ATP</name>
        <dbReference type="ChEBI" id="CHEBI:30616"/>
    </ligand>
</feature>
<feature type="binding site" evidence="1">
    <location>
        <position position="69"/>
    </location>
    <ligand>
        <name>Mg(2+)</name>
        <dbReference type="ChEBI" id="CHEBI:18420"/>
    </ligand>
</feature>
<feature type="binding site" evidence="1">
    <location>
        <position position="70"/>
    </location>
    <ligand>
        <name>ATP</name>
        <dbReference type="ChEBI" id="CHEBI:30616"/>
    </ligand>
</feature>
<feature type="binding site" evidence="1">
    <location>
        <begin position="131"/>
        <end position="133"/>
    </location>
    <ligand>
        <name>ATP</name>
        <dbReference type="ChEBI" id="CHEBI:30616"/>
    </ligand>
</feature>
<feature type="binding site" evidence="1">
    <location>
        <position position="174"/>
    </location>
    <ligand>
        <name>ATP</name>
        <dbReference type="ChEBI" id="CHEBI:30616"/>
    </ligand>
</feature>
<feature type="binding site" evidence="1">
    <location>
        <position position="184"/>
    </location>
    <ligand>
        <name>ATP</name>
        <dbReference type="ChEBI" id="CHEBI:30616"/>
    </ligand>
</feature>
<feature type="binding site" evidence="1">
    <location>
        <position position="221"/>
    </location>
    <ligand>
        <name>ATP</name>
        <dbReference type="ChEBI" id="CHEBI:30616"/>
    </ligand>
</feature>
<feature type="binding site" evidence="1">
    <location>
        <position position="294"/>
    </location>
    <ligand>
        <name>DNA</name>
        <dbReference type="ChEBI" id="CHEBI:16991"/>
    </ligand>
</feature>
<feature type="binding site" evidence="1">
    <location>
        <position position="313"/>
    </location>
    <ligand>
        <name>DNA</name>
        <dbReference type="ChEBI" id="CHEBI:16991"/>
    </ligand>
</feature>
<feature type="binding site" evidence="1">
    <location>
        <position position="318"/>
    </location>
    <ligand>
        <name>DNA</name>
        <dbReference type="ChEBI" id="CHEBI:16991"/>
    </ligand>
</feature>
<accession>B1JLL0</accession>